<dbReference type="EC" id="1.1.1.27"/>
<dbReference type="EMBL" id="M93720">
    <property type="protein sequence ID" value="AAA29633.1"/>
    <property type="molecule type" value="mRNA"/>
</dbReference>
<dbReference type="PDB" id="1CEQ">
    <property type="method" value="X-ray"/>
    <property type="resolution" value="2.00 A"/>
    <property type="chains" value="A=1-316"/>
</dbReference>
<dbReference type="PDB" id="1CET">
    <property type="method" value="X-ray"/>
    <property type="resolution" value="2.05 A"/>
    <property type="chains" value="A=1-316"/>
</dbReference>
<dbReference type="PDB" id="1LDG">
    <property type="method" value="X-ray"/>
    <property type="resolution" value="1.74 A"/>
    <property type="chains" value="A=1-316"/>
</dbReference>
<dbReference type="PDB" id="1T24">
    <property type="method" value="X-ray"/>
    <property type="resolution" value="1.70 A"/>
    <property type="chains" value="A=1-316"/>
</dbReference>
<dbReference type="PDB" id="1T25">
    <property type="method" value="X-ray"/>
    <property type="resolution" value="1.90 A"/>
    <property type="chains" value="A=1-316"/>
</dbReference>
<dbReference type="PDB" id="1T26">
    <property type="method" value="X-ray"/>
    <property type="resolution" value="1.80 A"/>
    <property type="chains" value="A=1-316"/>
</dbReference>
<dbReference type="PDB" id="1T2C">
    <property type="method" value="X-ray"/>
    <property type="resolution" value="2.01 A"/>
    <property type="chains" value="A=1-316"/>
</dbReference>
<dbReference type="PDB" id="1T2D">
    <property type="method" value="X-ray"/>
    <property type="resolution" value="1.10 A"/>
    <property type="chains" value="A=1-316"/>
</dbReference>
<dbReference type="PDB" id="1T2E">
    <property type="method" value="X-ray"/>
    <property type="resolution" value="1.85 A"/>
    <property type="chains" value="A=1-316"/>
</dbReference>
<dbReference type="PDB" id="1U4O">
    <property type="method" value="X-ray"/>
    <property type="resolution" value="1.70 A"/>
    <property type="chains" value="A=2-316"/>
</dbReference>
<dbReference type="PDB" id="1U4S">
    <property type="method" value="X-ray"/>
    <property type="resolution" value="2.00 A"/>
    <property type="chains" value="A=2-316"/>
</dbReference>
<dbReference type="PDB" id="1U5A">
    <property type="method" value="X-ray"/>
    <property type="resolution" value="1.80 A"/>
    <property type="chains" value="A=2-316"/>
</dbReference>
<dbReference type="PDB" id="1U5C">
    <property type="method" value="X-ray"/>
    <property type="resolution" value="2.65 A"/>
    <property type="chains" value="A=2-316"/>
</dbReference>
<dbReference type="PDB" id="1XIV">
    <property type="method" value="X-ray"/>
    <property type="resolution" value="1.70 A"/>
    <property type="chains" value="A=2-316"/>
</dbReference>
<dbReference type="PDB" id="2A94">
    <property type="method" value="X-ray"/>
    <property type="resolution" value="1.50 A"/>
    <property type="chains" value="A=2-316"/>
</dbReference>
<dbReference type="PDB" id="4PLZ">
    <property type="method" value="X-ray"/>
    <property type="resolution" value="1.05 A"/>
    <property type="chains" value="A=1-316"/>
</dbReference>
<dbReference type="PDBsum" id="1CEQ"/>
<dbReference type="PDBsum" id="1CET"/>
<dbReference type="PDBsum" id="1LDG"/>
<dbReference type="PDBsum" id="1T24"/>
<dbReference type="PDBsum" id="1T25"/>
<dbReference type="PDBsum" id="1T26"/>
<dbReference type="PDBsum" id="1T2C"/>
<dbReference type="PDBsum" id="1T2D"/>
<dbReference type="PDBsum" id="1T2E"/>
<dbReference type="PDBsum" id="1U4O"/>
<dbReference type="PDBsum" id="1U4S"/>
<dbReference type="PDBsum" id="1U5A"/>
<dbReference type="PDBsum" id="1U5C"/>
<dbReference type="PDBsum" id="1XIV"/>
<dbReference type="PDBsum" id="2A94"/>
<dbReference type="PDBsum" id="4PLZ"/>
<dbReference type="SMR" id="Q27743"/>
<dbReference type="BindingDB" id="Q27743"/>
<dbReference type="DrugBank" id="DB04641">
    <property type="generic name" value="3,7-DIHYDROXYNAPHTHALENE-2-CARBOXYLIC ACID"/>
</dbReference>
<dbReference type="DrugBank" id="DB02111">
    <property type="generic name" value="3-hydroxyisoxazole-4-carboxylic acid"/>
</dbReference>
<dbReference type="DrugBank" id="DB02401">
    <property type="generic name" value="4-Hydroxy-1,2,5-oxadiazole-3-carboxylic acid"/>
</dbReference>
<dbReference type="DrugBank" id="DB03162">
    <property type="generic name" value="4-oxo-4,5-dihydro-1,2,5-thiadiazole-3-carboxylic acid"/>
</dbReference>
<dbReference type="DrugBank" id="DB11638">
    <property type="generic name" value="Artenimol"/>
</dbReference>
<dbReference type="DrugBank" id="DB04640">
    <property type="generic name" value="Naphthalene-2,6-disulfonic acid"/>
</dbReference>
<dbReference type="DrugBank" id="DB03940">
    <property type="generic name" value="Oxamic Acid"/>
</dbReference>
<dbReference type="ABCD" id="Q27743">
    <property type="antibodies" value="2 sequenced antibodies"/>
</dbReference>
<dbReference type="BRENDA" id="1.1.1.27">
    <property type="organism ID" value="4889"/>
</dbReference>
<dbReference type="SABIO-RK" id="Q27743"/>
<dbReference type="UniPathway" id="UPA00554">
    <property type="reaction ID" value="UER00611"/>
</dbReference>
<dbReference type="EvolutionaryTrace" id="Q27743"/>
<dbReference type="GO" id="GO:0004459">
    <property type="term" value="F:L-lactate dehydrogenase activity"/>
    <property type="evidence" value="ECO:0007669"/>
    <property type="project" value="UniProtKB-EC"/>
</dbReference>
<dbReference type="GO" id="GO:0006089">
    <property type="term" value="P:lactate metabolic process"/>
    <property type="evidence" value="ECO:0007669"/>
    <property type="project" value="TreeGrafter"/>
</dbReference>
<dbReference type="CDD" id="cd01339">
    <property type="entry name" value="LDH-like_MDH"/>
    <property type="match status" value="1"/>
</dbReference>
<dbReference type="FunFam" id="3.40.50.720:FF:000362">
    <property type="entry name" value="L-lactate dehydrogenase"/>
    <property type="match status" value="1"/>
</dbReference>
<dbReference type="FunFam" id="3.90.110.10:FF:000011">
    <property type="entry name" value="L-lactate dehydrogenase"/>
    <property type="match status" value="1"/>
</dbReference>
<dbReference type="Gene3D" id="3.90.110.10">
    <property type="entry name" value="Lactate dehydrogenase/glycoside hydrolase, family 4, C-terminal"/>
    <property type="match status" value="1"/>
</dbReference>
<dbReference type="Gene3D" id="3.40.50.720">
    <property type="entry name" value="NAD(P)-binding Rossmann-like Domain"/>
    <property type="match status" value="1"/>
</dbReference>
<dbReference type="InterPro" id="IPR001557">
    <property type="entry name" value="L-lactate/malate_DH"/>
</dbReference>
<dbReference type="InterPro" id="IPR022383">
    <property type="entry name" value="Lactate/malate_DH_C"/>
</dbReference>
<dbReference type="InterPro" id="IPR001236">
    <property type="entry name" value="Lactate/malate_DH_N"/>
</dbReference>
<dbReference type="InterPro" id="IPR015955">
    <property type="entry name" value="Lactate_DH/Glyco_Ohase_4_C"/>
</dbReference>
<dbReference type="InterPro" id="IPR011275">
    <property type="entry name" value="Malate_DH_type3"/>
</dbReference>
<dbReference type="InterPro" id="IPR036291">
    <property type="entry name" value="NAD(P)-bd_dom_sf"/>
</dbReference>
<dbReference type="NCBIfam" id="NF004863">
    <property type="entry name" value="PRK06223.1"/>
    <property type="match status" value="1"/>
</dbReference>
<dbReference type="PANTHER" id="PTHR43128">
    <property type="entry name" value="L-2-HYDROXYCARBOXYLATE DEHYDROGENASE (NAD(P)(+))"/>
    <property type="match status" value="1"/>
</dbReference>
<dbReference type="PANTHER" id="PTHR43128:SF16">
    <property type="entry name" value="L-LACTATE DEHYDROGENASE"/>
    <property type="match status" value="1"/>
</dbReference>
<dbReference type="Pfam" id="PF02866">
    <property type="entry name" value="Ldh_1_C"/>
    <property type="match status" value="1"/>
</dbReference>
<dbReference type="Pfam" id="PF00056">
    <property type="entry name" value="Ldh_1_N"/>
    <property type="match status" value="1"/>
</dbReference>
<dbReference type="PIRSF" id="PIRSF000102">
    <property type="entry name" value="Lac_mal_DH"/>
    <property type="match status" value="1"/>
</dbReference>
<dbReference type="PRINTS" id="PR00086">
    <property type="entry name" value="LLDHDRGNASE"/>
</dbReference>
<dbReference type="SUPFAM" id="SSF56327">
    <property type="entry name" value="LDH C-terminal domain-like"/>
    <property type="match status" value="1"/>
</dbReference>
<dbReference type="SUPFAM" id="SSF51735">
    <property type="entry name" value="NAD(P)-binding Rossmann-fold domains"/>
    <property type="match status" value="1"/>
</dbReference>
<protein>
    <recommendedName>
        <fullName>L-lactate dehydrogenase</fullName>
        <ecNumber>1.1.1.27</ecNumber>
    </recommendedName>
    <alternativeName>
        <fullName>LDH-P</fullName>
    </alternativeName>
</protein>
<organism>
    <name type="scientific">Plasmodium falciparum (isolate CDC / Honduras)</name>
    <dbReference type="NCBI Taxonomy" id="5836"/>
    <lineage>
        <taxon>Eukaryota</taxon>
        <taxon>Sar</taxon>
        <taxon>Alveolata</taxon>
        <taxon>Apicomplexa</taxon>
        <taxon>Aconoidasida</taxon>
        <taxon>Haemosporida</taxon>
        <taxon>Plasmodiidae</taxon>
        <taxon>Plasmodium</taxon>
        <taxon>Plasmodium (Laverania)</taxon>
    </lineage>
</organism>
<comment type="catalytic activity">
    <reaction>
        <text>(S)-lactate + NAD(+) = pyruvate + NADH + H(+)</text>
        <dbReference type="Rhea" id="RHEA:23444"/>
        <dbReference type="ChEBI" id="CHEBI:15361"/>
        <dbReference type="ChEBI" id="CHEBI:15378"/>
        <dbReference type="ChEBI" id="CHEBI:16651"/>
        <dbReference type="ChEBI" id="CHEBI:57540"/>
        <dbReference type="ChEBI" id="CHEBI:57945"/>
        <dbReference type="EC" id="1.1.1.27"/>
    </reaction>
</comment>
<comment type="pathway">
    <text>Fermentation; pyruvate fermentation to lactate; (S)-lactate from pyruvate: step 1/1.</text>
</comment>
<comment type="subunit">
    <text>Homotetramer.</text>
</comment>
<comment type="similarity">
    <text evidence="3">Belongs to the LDH/MDH superfamily. LDH family.</text>
</comment>
<sequence>MAPKAKIVLVGSGMIGGVMATLIVQKNLGDVVLFDIVKNMPHGKALDTSHTNVMAYSNCKVSGSNTYDDLAGADVVIVTAGFTKAPGKSDKEWNRDDLLPLNNKIMIEIGGHIKKNCPNAFIIVVTNPVDVMVQLLHQHSGVPKNKIIGLGGVLDTSRLKYYISQKLNVCPRDVNAHIVGAHGNKMVLLKRYITVGGIPLQEFINNKLISDAELEAIFDRTVNTALEIVNLHASPYVAPAAAIIEMAESYLKDLKKVLICSTLLEGQYGHSDIFGGTPVVLGANGVEQVIELQLNSEEKAKFDEAIAETKRMKALA</sequence>
<proteinExistence type="evidence at protein level"/>
<evidence type="ECO:0000269" key="1">
    <source>
    </source>
</evidence>
<evidence type="ECO:0000269" key="2">
    <source>
    </source>
</evidence>
<evidence type="ECO:0000305" key="3"/>
<evidence type="ECO:0007829" key="4">
    <source>
        <dbReference type="PDB" id="1CEQ"/>
    </source>
</evidence>
<evidence type="ECO:0007829" key="5">
    <source>
        <dbReference type="PDB" id="1T24"/>
    </source>
</evidence>
<evidence type="ECO:0007829" key="6">
    <source>
        <dbReference type="PDB" id="1T26"/>
    </source>
</evidence>
<evidence type="ECO:0007829" key="7">
    <source>
        <dbReference type="PDB" id="4PLZ"/>
    </source>
</evidence>
<feature type="chain" id="PRO_0000168495" description="L-lactate dehydrogenase">
    <location>
        <begin position="1"/>
        <end position="316"/>
    </location>
</feature>
<feature type="active site" description="Proton acceptor">
    <location>
        <position position="182"/>
    </location>
</feature>
<feature type="binding site">
    <location>
        <begin position="14"/>
        <end position="150"/>
    </location>
    <ligand>
        <name>NAD(+)</name>
        <dbReference type="ChEBI" id="CHEBI:57540"/>
    </ligand>
</feature>
<feature type="binding site">
    <location>
        <position position="14"/>
    </location>
    <ligand>
        <name>NAD(+)</name>
        <dbReference type="ChEBI" id="CHEBI:57540"/>
    </ligand>
</feature>
<feature type="binding site">
    <location>
        <position position="15"/>
    </location>
    <ligand>
        <name>NAD(+)</name>
        <dbReference type="ChEBI" id="CHEBI:57540"/>
    </ligand>
</feature>
<feature type="binding site">
    <location>
        <position position="35"/>
    </location>
    <ligand>
        <name>NAD(+)</name>
        <dbReference type="ChEBI" id="CHEBI:57540"/>
    </ligand>
</feature>
<feature type="binding site">
    <location>
        <position position="67"/>
    </location>
    <ligand>
        <name>NAD(+)</name>
        <dbReference type="ChEBI" id="CHEBI:57540"/>
    </ligand>
</feature>
<feature type="binding site">
    <location>
        <position position="81"/>
    </location>
    <ligand>
        <name>NAD(+)</name>
        <dbReference type="ChEBI" id="CHEBI:57540"/>
    </ligand>
</feature>
<feature type="binding site">
    <location>
        <position position="82"/>
    </location>
    <ligand>
        <name>NAD(+)</name>
        <dbReference type="ChEBI" id="CHEBI:57540"/>
    </ligand>
</feature>
<feature type="binding site">
    <location>
        <position position="95"/>
    </location>
    <ligand>
        <name>substrate</name>
    </ligand>
</feature>
<feature type="binding site">
    <location>
        <position position="125"/>
    </location>
    <ligand>
        <name>NAD(+)</name>
        <dbReference type="ChEBI" id="CHEBI:57540"/>
    </ligand>
</feature>
<feature type="binding site">
    <location>
        <position position="127"/>
    </location>
    <ligand>
        <name>NAD(+)</name>
        <dbReference type="ChEBI" id="CHEBI:57540"/>
    </ligand>
</feature>
<feature type="binding site">
    <location>
        <position position="150"/>
    </location>
    <ligand>
        <name>NAD(+)</name>
        <dbReference type="ChEBI" id="CHEBI:57540"/>
    </ligand>
</feature>
<feature type="binding site">
    <location>
        <position position="158"/>
    </location>
    <ligand>
        <name>substrate</name>
    </ligand>
</feature>
<feature type="binding site">
    <location>
        <position position="182"/>
    </location>
    <ligand>
        <name>substrate</name>
    </ligand>
</feature>
<feature type="sequence variant" evidence="1 2">
    <original>A</original>
    <variation>S</variation>
    <location>
        <position position="73"/>
    </location>
</feature>
<feature type="sequence variant" evidence="1 2">
    <original>D</original>
    <variation>L</variation>
    <location>
        <position position="96"/>
    </location>
</feature>
<feature type="strand" evidence="7">
    <location>
        <begin position="6"/>
        <end position="10"/>
    </location>
</feature>
<feature type="helix" evidence="7">
    <location>
        <begin position="14"/>
        <end position="25"/>
    </location>
</feature>
<feature type="strand" evidence="7">
    <location>
        <begin position="30"/>
        <end position="34"/>
    </location>
</feature>
<feature type="strand" evidence="7">
    <location>
        <begin position="36"/>
        <end position="39"/>
    </location>
</feature>
<feature type="helix" evidence="7">
    <location>
        <begin position="40"/>
        <end position="49"/>
    </location>
</feature>
<feature type="helix" evidence="7">
    <location>
        <begin position="51"/>
        <end position="55"/>
    </location>
</feature>
<feature type="strand" evidence="7">
    <location>
        <begin position="61"/>
        <end position="64"/>
    </location>
</feature>
<feature type="helix" evidence="7">
    <location>
        <begin position="67"/>
        <end position="70"/>
    </location>
</feature>
<feature type="strand" evidence="7">
    <location>
        <begin position="74"/>
        <end position="78"/>
    </location>
</feature>
<feature type="helix" evidence="5">
    <location>
        <begin position="90"/>
        <end position="92"/>
    </location>
</feature>
<feature type="helix" evidence="4">
    <location>
        <begin position="95"/>
        <end position="97"/>
    </location>
</feature>
<feature type="helix" evidence="7">
    <location>
        <begin position="98"/>
        <end position="116"/>
    </location>
</feature>
<feature type="strand" evidence="7">
    <location>
        <begin position="120"/>
        <end position="124"/>
    </location>
</feature>
<feature type="strand" evidence="7">
    <location>
        <begin position="126"/>
        <end position="128"/>
    </location>
</feature>
<feature type="helix" evidence="7">
    <location>
        <begin position="129"/>
        <end position="140"/>
    </location>
</feature>
<feature type="helix" evidence="7">
    <location>
        <begin position="144"/>
        <end position="146"/>
    </location>
</feature>
<feature type="strand" evidence="7">
    <location>
        <begin position="147"/>
        <end position="150"/>
    </location>
</feature>
<feature type="helix" evidence="7">
    <location>
        <begin position="152"/>
        <end position="167"/>
    </location>
</feature>
<feature type="helix" evidence="7">
    <location>
        <begin position="171"/>
        <end position="173"/>
    </location>
</feature>
<feature type="strand" evidence="7">
    <location>
        <begin position="178"/>
        <end position="180"/>
    </location>
</feature>
<feature type="helix" evidence="7">
    <location>
        <begin position="190"/>
        <end position="192"/>
    </location>
</feature>
<feature type="helix" evidence="7">
    <location>
        <begin position="200"/>
        <end position="205"/>
    </location>
</feature>
<feature type="helix" evidence="7">
    <location>
        <begin position="211"/>
        <end position="222"/>
    </location>
</feature>
<feature type="helix" evidence="7">
    <location>
        <begin position="224"/>
        <end position="230"/>
    </location>
</feature>
<feature type="strand" evidence="6">
    <location>
        <begin position="232"/>
        <end position="234"/>
    </location>
</feature>
<feature type="helix" evidence="7">
    <location>
        <begin position="237"/>
        <end position="251"/>
    </location>
</feature>
<feature type="strand" evidence="7">
    <location>
        <begin position="256"/>
        <end position="266"/>
    </location>
</feature>
<feature type="helix" evidence="7">
    <location>
        <begin position="267"/>
        <end position="269"/>
    </location>
</feature>
<feature type="strand" evidence="7">
    <location>
        <begin position="271"/>
        <end position="282"/>
    </location>
</feature>
<feature type="strand" evidence="7">
    <location>
        <begin position="285"/>
        <end position="289"/>
    </location>
</feature>
<feature type="helix" evidence="7">
    <location>
        <begin position="296"/>
        <end position="316"/>
    </location>
</feature>
<name>LDH_PLAFD</name>
<reference key="1">
    <citation type="journal article" date="1993" name="Mol. Biochem. Parasitol.">
        <title>Expression of Plasmodium falciparum lactate dehydrogenase in Escherichia coli.</title>
        <authorList>
            <person name="Bzik D.J."/>
            <person name="Fox B.A."/>
            <person name="Gonyer K."/>
        </authorList>
    </citation>
    <scope>NUCLEOTIDE SEQUENCE [MRNA]</scope>
</reference>
<reference key="2">
    <citation type="journal article" date="1996" name="Nat. Struct. Biol.">
        <title>The structure of lactate dehydrogenase from Plasmodium falciparum reveals a new target for anti-malarial design.</title>
        <authorList>
            <person name="Dunn C."/>
            <person name="Banfield M."/>
            <person name="Barker J."/>
            <person name="Higham C."/>
            <person name="Moreton K."/>
            <person name="Turgut-Balik D."/>
            <person name="Brady L."/>
            <person name="Holbrook J.J."/>
        </authorList>
    </citation>
    <scope>X-RAY CRYSTALLOGRAPHY (1.74 ANGSTROMS)</scope>
    <scope>VARIANTS SER-73 AND LEU-96</scope>
</reference>
<reference key="3">
    <citation type="journal article" date="1999" name="J. Biol. Chem.">
        <title>Chloroquine binds in the cofactor binding site of Plasmodium falciparum lactate dehydrogenase.</title>
        <authorList>
            <person name="Read J.A."/>
            <person name="Wilkinson K.W."/>
            <person name="Tranter R."/>
            <person name="Sessions R.B."/>
            <person name="Brady R.L."/>
        </authorList>
    </citation>
    <scope>X-RAY CRYSTALLOGRAPHY (2.0 ANGSTROMS)</scope>
    <scope>VARIANTS SER-73 AND LEU-96</scope>
</reference>
<keyword id="KW-0002">3D-structure</keyword>
<keyword id="KW-0520">NAD</keyword>
<keyword id="KW-0560">Oxidoreductase</keyword>
<keyword id="KW-0670">Pyruvate</keyword>
<accession>Q27743</accession>